<dbReference type="EC" id="2.5.1.45"/>
<dbReference type="EMBL" id="AJ238623">
    <property type="protein sequence ID" value="CAB65462.1"/>
    <property type="molecule type" value="mRNA"/>
</dbReference>
<dbReference type="SMR" id="Q9SC13"/>
<dbReference type="KEGG" id="ag:CAB65462"/>
<dbReference type="BioCyc" id="MetaCyc:MONOMER-13926"/>
<dbReference type="BRENDA" id="2.5.1.45">
    <property type="organism ID" value="5675"/>
</dbReference>
<dbReference type="SABIO-RK" id="Q9SC13"/>
<dbReference type="UniPathway" id="UPA00329"/>
<dbReference type="GO" id="GO:0005737">
    <property type="term" value="C:cytoplasm"/>
    <property type="evidence" value="ECO:0007669"/>
    <property type="project" value="TreeGrafter"/>
</dbReference>
<dbReference type="GO" id="GO:0034038">
    <property type="term" value="F:deoxyhypusine synthase activity"/>
    <property type="evidence" value="ECO:0007669"/>
    <property type="project" value="TreeGrafter"/>
</dbReference>
<dbReference type="GO" id="GO:0050514">
    <property type="term" value="F:homospermidine synthase (spermidine-specific) activity"/>
    <property type="evidence" value="ECO:0007669"/>
    <property type="project" value="UniProtKB-EC"/>
</dbReference>
<dbReference type="FunFam" id="3.40.910.10:FF:000002">
    <property type="entry name" value="Deoxyhypusine synthase"/>
    <property type="match status" value="1"/>
</dbReference>
<dbReference type="Gene3D" id="3.40.910.10">
    <property type="entry name" value="Deoxyhypusine synthase"/>
    <property type="match status" value="1"/>
</dbReference>
<dbReference type="InterPro" id="IPR002773">
    <property type="entry name" value="Deoxyhypusine_synthase"/>
</dbReference>
<dbReference type="InterPro" id="IPR036982">
    <property type="entry name" value="Deoxyhypusine_synthase_sf"/>
</dbReference>
<dbReference type="InterPro" id="IPR029035">
    <property type="entry name" value="DHS-like_NAD/FAD-binding_dom"/>
</dbReference>
<dbReference type="NCBIfam" id="TIGR00321">
    <property type="entry name" value="dhys"/>
    <property type="match status" value="1"/>
</dbReference>
<dbReference type="PANTHER" id="PTHR11703">
    <property type="entry name" value="DEOXYHYPUSINE SYNTHASE"/>
    <property type="match status" value="1"/>
</dbReference>
<dbReference type="PANTHER" id="PTHR11703:SF0">
    <property type="entry name" value="DEOXYHYPUSINE SYNTHASE"/>
    <property type="match status" value="1"/>
</dbReference>
<dbReference type="Pfam" id="PF01916">
    <property type="entry name" value="DS"/>
    <property type="match status" value="1"/>
</dbReference>
<dbReference type="SUPFAM" id="SSF52467">
    <property type="entry name" value="DHS-like NAD/FAD-binding domain"/>
    <property type="match status" value="1"/>
</dbReference>
<sequence>MAESNKEAIDSARSNVFKESESLEGTCAKIGGYDFNNGIDHSKLLKSMVSTGFQASNLGDAMIITNQMLDWRLSHDEVPENCSEEEKKNRESVKCKIFLGFTSNLISSGVRETICYLTQHRMVDVLVTTTGGIEEDFIKCLASTYKGKFSLPGADLRSKGLNRIGNLIVPNDNYIKFEDWIIPIFDQMLIEQKTQNVLWTPSRMIARLGKEINNETSYLYWAYKNNIPVFCPSITDGSIGDMLYFHSVSNPGPGLVVDIVQDVIAMDNEAVHASPQKTGIIILGGGLPKHHICNANMMRNGADFAVFINTAQEYDGSDSGARPDEAVSWGKISSTGKAVKVHCDATIAFPLLVAETFAVKKEKASKVNGF</sequence>
<organism>
    <name type="scientific">Senecio vernalis</name>
    <name type="common">Spring groundsel</name>
    <dbReference type="NCBI Taxonomy" id="93496"/>
    <lineage>
        <taxon>Eukaryota</taxon>
        <taxon>Viridiplantae</taxon>
        <taxon>Streptophyta</taxon>
        <taxon>Embryophyta</taxon>
        <taxon>Tracheophyta</taxon>
        <taxon>Spermatophyta</taxon>
        <taxon>Magnoliopsida</taxon>
        <taxon>eudicotyledons</taxon>
        <taxon>Gunneridae</taxon>
        <taxon>Pentapetalae</taxon>
        <taxon>asterids</taxon>
        <taxon>campanulids</taxon>
        <taxon>Asterales</taxon>
        <taxon>Asteraceae</taxon>
        <taxon>Asteroideae</taxon>
        <taxon>Senecioneae</taxon>
        <taxon>Senecioninae</taxon>
        <taxon>Senecio</taxon>
    </lineage>
</organism>
<feature type="chain" id="PRO_0000134517" description="Homospermidine synthase 1">
    <location>
        <begin position="1"/>
        <end position="370"/>
    </location>
</feature>
<gene>
    <name type="primary">HSS1</name>
</gene>
<accession>Q9SC13</accession>
<reference key="1">
    <citation type="journal article" date="1999" name="Proc. Natl. Acad. Sci. U.S.A.">
        <title>Homospermidine synthase, the first pathway-specific enzyme of pyrrolizidine alkaloid biosynthesis, evolved from deoxyhypusine synthase.</title>
        <authorList>
            <person name="Ober D."/>
            <person name="Hartmann T."/>
        </authorList>
    </citation>
    <scope>NUCLEOTIDE SEQUENCE [MRNA]</scope>
    <scope>PROTEIN SEQUENCE OF 7-17; 151-159; 211-224 AND 278-289</scope>
    <source>
        <tissue>Root</tissue>
    </source>
</reference>
<reference key="2">
    <citation type="journal article" date="2000" name="Phytochemistry">
        <title>Cloning and expression of homospermidine synthase from Senecio vulgaris: a revision.</title>
        <authorList>
            <person name="Ober D."/>
            <person name="Harms R."/>
            <person name="Hartmann T."/>
        </authorList>
    </citation>
    <scope>NUCLEOTIDE SEQUENCE [MRNA]</scope>
</reference>
<name>HSS1_SENVE</name>
<proteinExistence type="evidence at protein level"/>
<evidence type="ECO:0000305" key="1"/>
<comment type="function">
    <text>Catalyzes the transfer of an aminobutyl unit from spermidine onto putrescine. The resulting polyamine homospermidine is a precursor in the biosynthesis of pyrrolizidine alkaloids.</text>
</comment>
<comment type="catalytic activity">
    <reaction>
        <text>putrescine + spermidine = sym-homospermidine + propane-1,3-diamine</text>
        <dbReference type="Rhea" id="RHEA:11236"/>
        <dbReference type="ChEBI" id="CHEBI:57484"/>
        <dbReference type="ChEBI" id="CHEBI:57811"/>
        <dbReference type="ChEBI" id="CHEBI:57834"/>
        <dbReference type="ChEBI" id="CHEBI:326268"/>
        <dbReference type="EC" id="2.5.1.45"/>
    </reaction>
</comment>
<comment type="cofactor">
    <cofactor>
        <name>NAD(+)</name>
        <dbReference type="ChEBI" id="CHEBI:57540"/>
    </cofactor>
</comment>
<comment type="pathway">
    <text>Alkaloid biosynthesis; pyrrolizidine alkaloid biosynthesis.</text>
</comment>
<comment type="subunit">
    <text>Homotetramer.</text>
</comment>
<comment type="tissue specificity">
    <text>Expressed in roots.</text>
</comment>
<comment type="PTM">
    <text>The N-terminus is blocked.</text>
</comment>
<comment type="similarity">
    <text evidence="1">Belongs to the deoxyhypusine synthase family.</text>
</comment>
<comment type="caution">
    <text evidence="1">Sequence shown in PubMed:10611289 correspond to the product of the second gene cited in PubMed:11117877.</text>
</comment>
<protein>
    <recommendedName>
        <fullName>Homospermidine synthase 1</fullName>
        <ecNumber>2.5.1.45</ecNumber>
    </recommendedName>
</protein>
<keyword id="KW-0903">Direct protein sequencing</keyword>
<keyword id="KW-0520">NAD</keyword>
<keyword id="KW-0808">Transferase</keyword>